<name>NADD_CALBD</name>
<organism>
    <name type="scientific">Caldicellulosiruptor bescii (strain ATCC BAA-1888 / DSM 6725 / KCTC 15123 / Z-1320)</name>
    <name type="common">Anaerocellum thermophilum</name>
    <dbReference type="NCBI Taxonomy" id="521460"/>
    <lineage>
        <taxon>Bacteria</taxon>
        <taxon>Bacillati</taxon>
        <taxon>Bacillota</taxon>
        <taxon>Bacillota incertae sedis</taxon>
        <taxon>Caldicellulosiruptorales</taxon>
        <taxon>Caldicellulosiruptoraceae</taxon>
        <taxon>Caldicellulosiruptor</taxon>
    </lineage>
</organism>
<sequence length="196" mass="23008">MKVALFGGTFNPIHIGHLIMAQYVLNFSQVQKVIFVPNGHPPHKVEDVADAFDRFEMVKLSIEDNPYFDISDFEIKKSNPSWTIDTLEYFSSIYERVYFIIGSDNLSEIVKWYKAEEILKRYPLIVLPRERNLCAIKKEIEKLSSKYAQDITLIQMPVIDISSTEIRKLISQDKSIRYMVHPKVEEYIKRKGLFKR</sequence>
<feature type="chain" id="PRO_1000125335" description="Probable nicotinate-nucleotide adenylyltransferase">
    <location>
        <begin position="1"/>
        <end position="196"/>
    </location>
</feature>
<comment type="function">
    <text evidence="1">Catalyzes the reversible adenylation of nicotinate mononucleotide (NaMN) to nicotinic acid adenine dinucleotide (NaAD).</text>
</comment>
<comment type="catalytic activity">
    <reaction evidence="1">
        <text>nicotinate beta-D-ribonucleotide + ATP + H(+) = deamido-NAD(+) + diphosphate</text>
        <dbReference type="Rhea" id="RHEA:22860"/>
        <dbReference type="ChEBI" id="CHEBI:15378"/>
        <dbReference type="ChEBI" id="CHEBI:30616"/>
        <dbReference type="ChEBI" id="CHEBI:33019"/>
        <dbReference type="ChEBI" id="CHEBI:57502"/>
        <dbReference type="ChEBI" id="CHEBI:58437"/>
        <dbReference type="EC" id="2.7.7.18"/>
    </reaction>
</comment>
<comment type="pathway">
    <text evidence="1">Cofactor biosynthesis; NAD(+) biosynthesis; deamido-NAD(+) from nicotinate D-ribonucleotide: step 1/1.</text>
</comment>
<comment type="similarity">
    <text evidence="1">Belongs to the NadD family.</text>
</comment>
<accession>B9MRP6</accession>
<reference key="1">
    <citation type="submission" date="2009-01" db="EMBL/GenBank/DDBJ databases">
        <title>Complete sequence of chromosome of Caldicellulosiruptor becscii DSM 6725.</title>
        <authorList>
            <person name="Lucas S."/>
            <person name="Copeland A."/>
            <person name="Lapidus A."/>
            <person name="Glavina del Rio T."/>
            <person name="Tice H."/>
            <person name="Bruce D."/>
            <person name="Goodwin L."/>
            <person name="Pitluck S."/>
            <person name="Sims D."/>
            <person name="Meincke L."/>
            <person name="Brettin T."/>
            <person name="Detter J.C."/>
            <person name="Han C."/>
            <person name="Larimer F."/>
            <person name="Land M."/>
            <person name="Hauser L."/>
            <person name="Kyrpides N."/>
            <person name="Ovchinnikova G."/>
            <person name="Kataeva I."/>
            <person name="Adams M.W.W."/>
        </authorList>
    </citation>
    <scope>NUCLEOTIDE SEQUENCE [LARGE SCALE GENOMIC DNA]</scope>
    <source>
        <strain>ATCC BAA-1888 / DSM 6725 / KCTC 15123 / Z-1320</strain>
    </source>
</reference>
<proteinExistence type="inferred from homology"/>
<gene>
    <name evidence="1" type="primary">nadD</name>
    <name type="ordered locus">Athe_1250</name>
</gene>
<protein>
    <recommendedName>
        <fullName evidence="1">Probable nicotinate-nucleotide adenylyltransferase</fullName>
        <ecNumber evidence="1">2.7.7.18</ecNumber>
    </recommendedName>
    <alternativeName>
        <fullName evidence="1">Deamido-NAD(+) diphosphorylase</fullName>
    </alternativeName>
    <alternativeName>
        <fullName evidence="1">Deamido-NAD(+) pyrophosphorylase</fullName>
    </alternativeName>
    <alternativeName>
        <fullName evidence="1">Nicotinate mononucleotide adenylyltransferase</fullName>
        <shortName evidence="1">NaMN adenylyltransferase</shortName>
    </alternativeName>
</protein>
<keyword id="KW-0067">ATP-binding</keyword>
<keyword id="KW-0520">NAD</keyword>
<keyword id="KW-0547">Nucleotide-binding</keyword>
<keyword id="KW-0548">Nucleotidyltransferase</keyword>
<keyword id="KW-0662">Pyridine nucleotide biosynthesis</keyword>
<keyword id="KW-0808">Transferase</keyword>
<dbReference type="EC" id="2.7.7.18" evidence="1"/>
<dbReference type="EMBL" id="CP001393">
    <property type="protein sequence ID" value="ACM60350.1"/>
    <property type="molecule type" value="Genomic_DNA"/>
</dbReference>
<dbReference type="RefSeq" id="WP_015907740.1">
    <property type="nucleotide sequence ID" value="NC_012034.1"/>
</dbReference>
<dbReference type="SMR" id="B9MRP6"/>
<dbReference type="STRING" id="521460.Athe_1250"/>
<dbReference type="GeneID" id="31772598"/>
<dbReference type="KEGG" id="ate:Athe_1250"/>
<dbReference type="eggNOG" id="COG1057">
    <property type="taxonomic scope" value="Bacteria"/>
</dbReference>
<dbReference type="HOGENOM" id="CLU_069765_3_1_9"/>
<dbReference type="UniPathway" id="UPA00253">
    <property type="reaction ID" value="UER00332"/>
</dbReference>
<dbReference type="Proteomes" id="UP000007723">
    <property type="component" value="Chromosome"/>
</dbReference>
<dbReference type="GO" id="GO:0005524">
    <property type="term" value="F:ATP binding"/>
    <property type="evidence" value="ECO:0007669"/>
    <property type="project" value="UniProtKB-KW"/>
</dbReference>
<dbReference type="GO" id="GO:0004515">
    <property type="term" value="F:nicotinate-nucleotide adenylyltransferase activity"/>
    <property type="evidence" value="ECO:0007669"/>
    <property type="project" value="UniProtKB-UniRule"/>
</dbReference>
<dbReference type="GO" id="GO:0009435">
    <property type="term" value="P:NAD biosynthetic process"/>
    <property type="evidence" value="ECO:0007669"/>
    <property type="project" value="UniProtKB-UniRule"/>
</dbReference>
<dbReference type="CDD" id="cd02165">
    <property type="entry name" value="NMNAT"/>
    <property type="match status" value="1"/>
</dbReference>
<dbReference type="Gene3D" id="3.40.50.620">
    <property type="entry name" value="HUPs"/>
    <property type="match status" value="1"/>
</dbReference>
<dbReference type="HAMAP" id="MF_00244">
    <property type="entry name" value="NaMN_adenylyltr"/>
    <property type="match status" value="1"/>
</dbReference>
<dbReference type="InterPro" id="IPR004821">
    <property type="entry name" value="Cyt_trans-like"/>
</dbReference>
<dbReference type="InterPro" id="IPR005248">
    <property type="entry name" value="NadD/NMNAT"/>
</dbReference>
<dbReference type="InterPro" id="IPR014729">
    <property type="entry name" value="Rossmann-like_a/b/a_fold"/>
</dbReference>
<dbReference type="NCBIfam" id="TIGR00125">
    <property type="entry name" value="cyt_tran_rel"/>
    <property type="match status" value="1"/>
</dbReference>
<dbReference type="NCBIfam" id="TIGR00482">
    <property type="entry name" value="nicotinate (nicotinamide) nucleotide adenylyltransferase"/>
    <property type="match status" value="1"/>
</dbReference>
<dbReference type="NCBIfam" id="NF000840">
    <property type="entry name" value="PRK00071.1-3"/>
    <property type="match status" value="1"/>
</dbReference>
<dbReference type="PANTHER" id="PTHR39321">
    <property type="entry name" value="NICOTINATE-NUCLEOTIDE ADENYLYLTRANSFERASE-RELATED"/>
    <property type="match status" value="1"/>
</dbReference>
<dbReference type="PANTHER" id="PTHR39321:SF3">
    <property type="entry name" value="PHOSPHOPANTETHEINE ADENYLYLTRANSFERASE"/>
    <property type="match status" value="1"/>
</dbReference>
<dbReference type="Pfam" id="PF01467">
    <property type="entry name" value="CTP_transf_like"/>
    <property type="match status" value="1"/>
</dbReference>
<dbReference type="SUPFAM" id="SSF52374">
    <property type="entry name" value="Nucleotidylyl transferase"/>
    <property type="match status" value="1"/>
</dbReference>
<evidence type="ECO:0000255" key="1">
    <source>
        <dbReference type="HAMAP-Rule" id="MF_00244"/>
    </source>
</evidence>